<accession>C0Q1W8</accession>
<gene>
    <name evidence="2" type="primary">mutM</name>
    <name evidence="2" type="synonym">fpg</name>
    <name type="ordered locus">SPC_3808</name>
</gene>
<keyword id="KW-0227">DNA damage</keyword>
<keyword id="KW-0234">DNA repair</keyword>
<keyword id="KW-0238">DNA-binding</keyword>
<keyword id="KW-0326">Glycosidase</keyword>
<keyword id="KW-0378">Hydrolase</keyword>
<keyword id="KW-0456">Lyase</keyword>
<keyword id="KW-0479">Metal-binding</keyword>
<keyword id="KW-0511">Multifunctional enzyme</keyword>
<keyword id="KW-0862">Zinc</keyword>
<keyword id="KW-0863">Zinc-finger</keyword>
<reference key="1">
    <citation type="journal article" date="2009" name="PLoS ONE">
        <title>Salmonella paratyphi C: genetic divergence from Salmonella choleraesuis and pathogenic convergence with Salmonella typhi.</title>
        <authorList>
            <person name="Liu W.-Q."/>
            <person name="Feng Y."/>
            <person name="Wang Y."/>
            <person name="Zou Q.-H."/>
            <person name="Chen F."/>
            <person name="Guo J.-T."/>
            <person name="Peng Y.-H."/>
            <person name="Jin Y."/>
            <person name="Li Y.-G."/>
            <person name="Hu S.-N."/>
            <person name="Johnston R.N."/>
            <person name="Liu G.-R."/>
            <person name="Liu S.-L."/>
        </authorList>
    </citation>
    <scope>NUCLEOTIDE SEQUENCE [LARGE SCALE GENOMIC DNA]</scope>
    <source>
        <strain>RKS4594</strain>
    </source>
</reference>
<dbReference type="EC" id="3.2.2.23" evidence="2"/>
<dbReference type="EC" id="4.2.99.18" evidence="2"/>
<dbReference type="EMBL" id="CP000857">
    <property type="protein sequence ID" value="ACN47884.1"/>
    <property type="molecule type" value="Genomic_DNA"/>
</dbReference>
<dbReference type="RefSeq" id="WP_001114510.1">
    <property type="nucleotide sequence ID" value="NC_012125.1"/>
</dbReference>
<dbReference type="SMR" id="C0Q1W8"/>
<dbReference type="KEGG" id="sei:SPC_3808"/>
<dbReference type="HOGENOM" id="CLU_038423_1_1_6"/>
<dbReference type="Proteomes" id="UP000001599">
    <property type="component" value="Chromosome"/>
</dbReference>
<dbReference type="GO" id="GO:0034039">
    <property type="term" value="F:8-oxo-7,8-dihydroguanine DNA N-glycosylase activity"/>
    <property type="evidence" value="ECO:0007669"/>
    <property type="project" value="TreeGrafter"/>
</dbReference>
<dbReference type="GO" id="GO:0140078">
    <property type="term" value="F:class I DNA-(apurinic or apyrimidinic site) endonuclease activity"/>
    <property type="evidence" value="ECO:0007669"/>
    <property type="project" value="UniProtKB-EC"/>
</dbReference>
<dbReference type="GO" id="GO:0003684">
    <property type="term" value="F:damaged DNA binding"/>
    <property type="evidence" value="ECO:0007669"/>
    <property type="project" value="InterPro"/>
</dbReference>
<dbReference type="GO" id="GO:0008270">
    <property type="term" value="F:zinc ion binding"/>
    <property type="evidence" value="ECO:0007669"/>
    <property type="project" value="UniProtKB-UniRule"/>
</dbReference>
<dbReference type="GO" id="GO:0006284">
    <property type="term" value="P:base-excision repair"/>
    <property type="evidence" value="ECO:0007669"/>
    <property type="project" value="InterPro"/>
</dbReference>
<dbReference type="CDD" id="cd08966">
    <property type="entry name" value="EcFpg-like_N"/>
    <property type="match status" value="1"/>
</dbReference>
<dbReference type="FunFam" id="1.10.8.50:FF:000003">
    <property type="entry name" value="Formamidopyrimidine-DNA glycosylase"/>
    <property type="match status" value="1"/>
</dbReference>
<dbReference type="FunFam" id="3.20.190.10:FF:000001">
    <property type="entry name" value="Formamidopyrimidine-DNA glycosylase"/>
    <property type="match status" value="1"/>
</dbReference>
<dbReference type="Gene3D" id="1.10.8.50">
    <property type="match status" value="1"/>
</dbReference>
<dbReference type="Gene3D" id="3.20.190.10">
    <property type="entry name" value="MutM-like, N-terminal"/>
    <property type="match status" value="1"/>
</dbReference>
<dbReference type="HAMAP" id="MF_00103">
    <property type="entry name" value="Fapy_DNA_glycosyl"/>
    <property type="match status" value="1"/>
</dbReference>
<dbReference type="InterPro" id="IPR015886">
    <property type="entry name" value="DNA_glyclase/AP_lyase_DNA-bd"/>
</dbReference>
<dbReference type="InterPro" id="IPR015887">
    <property type="entry name" value="DNA_glyclase_Znf_dom_DNA_BS"/>
</dbReference>
<dbReference type="InterPro" id="IPR020629">
    <property type="entry name" value="Formamido-pyr_DNA_Glyclase"/>
</dbReference>
<dbReference type="InterPro" id="IPR012319">
    <property type="entry name" value="FPG_cat"/>
</dbReference>
<dbReference type="InterPro" id="IPR035937">
    <property type="entry name" value="MutM-like_N-ter"/>
</dbReference>
<dbReference type="InterPro" id="IPR010979">
    <property type="entry name" value="Ribosomal_uS13-like_H2TH"/>
</dbReference>
<dbReference type="InterPro" id="IPR000214">
    <property type="entry name" value="Znf_DNA_glyclase/AP_lyase"/>
</dbReference>
<dbReference type="InterPro" id="IPR010663">
    <property type="entry name" value="Znf_FPG/IleRS"/>
</dbReference>
<dbReference type="NCBIfam" id="TIGR00577">
    <property type="entry name" value="fpg"/>
    <property type="match status" value="1"/>
</dbReference>
<dbReference type="NCBIfam" id="NF002211">
    <property type="entry name" value="PRK01103.1"/>
    <property type="match status" value="1"/>
</dbReference>
<dbReference type="PANTHER" id="PTHR22993">
    <property type="entry name" value="FORMAMIDOPYRIMIDINE-DNA GLYCOSYLASE"/>
    <property type="match status" value="1"/>
</dbReference>
<dbReference type="PANTHER" id="PTHR22993:SF9">
    <property type="entry name" value="FORMAMIDOPYRIMIDINE-DNA GLYCOSYLASE"/>
    <property type="match status" value="1"/>
</dbReference>
<dbReference type="Pfam" id="PF01149">
    <property type="entry name" value="Fapy_DNA_glyco"/>
    <property type="match status" value="1"/>
</dbReference>
<dbReference type="Pfam" id="PF06831">
    <property type="entry name" value="H2TH"/>
    <property type="match status" value="1"/>
</dbReference>
<dbReference type="Pfam" id="PF06827">
    <property type="entry name" value="zf-FPG_IleRS"/>
    <property type="match status" value="1"/>
</dbReference>
<dbReference type="SMART" id="SM00898">
    <property type="entry name" value="Fapy_DNA_glyco"/>
    <property type="match status" value="1"/>
</dbReference>
<dbReference type="SMART" id="SM01232">
    <property type="entry name" value="H2TH"/>
    <property type="match status" value="1"/>
</dbReference>
<dbReference type="SUPFAM" id="SSF57716">
    <property type="entry name" value="Glucocorticoid receptor-like (DNA-binding domain)"/>
    <property type="match status" value="1"/>
</dbReference>
<dbReference type="SUPFAM" id="SSF81624">
    <property type="entry name" value="N-terminal domain of MutM-like DNA repair proteins"/>
    <property type="match status" value="1"/>
</dbReference>
<dbReference type="SUPFAM" id="SSF46946">
    <property type="entry name" value="S13-like H2TH domain"/>
    <property type="match status" value="1"/>
</dbReference>
<dbReference type="PROSITE" id="PS51068">
    <property type="entry name" value="FPG_CAT"/>
    <property type="match status" value="1"/>
</dbReference>
<dbReference type="PROSITE" id="PS01242">
    <property type="entry name" value="ZF_FPG_1"/>
    <property type="match status" value="1"/>
</dbReference>
<dbReference type="PROSITE" id="PS51066">
    <property type="entry name" value="ZF_FPG_2"/>
    <property type="match status" value="1"/>
</dbReference>
<comment type="function">
    <text evidence="2">Involved in base excision repair of DNA damaged by oxidation or by mutagenic agents. Acts as a DNA glycosylase that recognizes and removes damaged bases. Has a preference for oxidized purines, such as 7,8-dihydro-8-oxoguanine (8-oxoG). Has AP (apurinic/apyrimidinic) lyase activity and introduces nicks in the DNA strand. Cleaves the DNA backbone by beta-delta elimination to generate a single-strand break at the site of the removed base with both 3'- and 5'-phosphates.</text>
</comment>
<comment type="catalytic activity">
    <reaction evidence="2">
        <text>Hydrolysis of DNA containing ring-opened 7-methylguanine residues, releasing 2,6-diamino-4-hydroxy-5-(N-methyl)formamidopyrimidine.</text>
        <dbReference type="EC" id="3.2.2.23"/>
    </reaction>
</comment>
<comment type="catalytic activity">
    <reaction evidence="2">
        <text>2'-deoxyribonucleotide-(2'-deoxyribose 5'-phosphate)-2'-deoxyribonucleotide-DNA = a 3'-end 2'-deoxyribonucleotide-(2,3-dehydro-2,3-deoxyribose 5'-phosphate)-DNA + a 5'-end 5'-phospho-2'-deoxyribonucleoside-DNA + H(+)</text>
        <dbReference type="Rhea" id="RHEA:66592"/>
        <dbReference type="Rhea" id="RHEA-COMP:13180"/>
        <dbReference type="Rhea" id="RHEA-COMP:16897"/>
        <dbReference type="Rhea" id="RHEA-COMP:17067"/>
        <dbReference type="ChEBI" id="CHEBI:15378"/>
        <dbReference type="ChEBI" id="CHEBI:136412"/>
        <dbReference type="ChEBI" id="CHEBI:157695"/>
        <dbReference type="ChEBI" id="CHEBI:167181"/>
        <dbReference type="EC" id="4.2.99.18"/>
    </reaction>
</comment>
<comment type="cofactor">
    <cofactor evidence="2">
        <name>Zn(2+)</name>
        <dbReference type="ChEBI" id="CHEBI:29105"/>
    </cofactor>
    <text evidence="2">Binds 1 zinc ion per subunit.</text>
</comment>
<comment type="subunit">
    <text evidence="2">Monomer.</text>
</comment>
<comment type="similarity">
    <text evidence="2">Belongs to the FPG family.</text>
</comment>
<feature type="initiator methionine" description="Removed" evidence="1">
    <location>
        <position position="1"/>
    </location>
</feature>
<feature type="chain" id="PRO_1000118901" description="Formamidopyrimidine-DNA glycosylase">
    <location>
        <begin position="2"/>
        <end position="269"/>
    </location>
</feature>
<feature type="zinc finger region" description="FPG-type" evidence="2">
    <location>
        <begin position="235"/>
        <end position="269"/>
    </location>
</feature>
<feature type="active site" description="Schiff-base intermediate with DNA" evidence="2">
    <location>
        <position position="2"/>
    </location>
</feature>
<feature type="active site" description="Proton donor" evidence="2">
    <location>
        <position position="3"/>
    </location>
</feature>
<feature type="active site" description="Proton donor; for beta-elimination activity" evidence="2">
    <location>
        <position position="57"/>
    </location>
</feature>
<feature type="active site" description="Proton donor; for delta-elimination activity" evidence="2">
    <location>
        <position position="259"/>
    </location>
</feature>
<feature type="binding site" evidence="2">
    <location>
        <position position="90"/>
    </location>
    <ligand>
        <name>DNA</name>
        <dbReference type="ChEBI" id="CHEBI:16991"/>
    </ligand>
</feature>
<feature type="binding site" evidence="2">
    <location>
        <position position="109"/>
    </location>
    <ligand>
        <name>DNA</name>
        <dbReference type="ChEBI" id="CHEBI:16991"/>
    </ligand>
</feature>
<feature type="binding site" evidence="2">
    <location>
        <position position="150"/>
    </location>
    <ligand>
        <name>DNA</name>
        <dbReference type="ChEBI" id="CHEBI:16991"/>
    </ligand>
</feature>
<sequence>MPELPEVETSRRGIEPHLVGATILHAHIRNGRLRWPVSDEIYRLSDTPVLSVQRRAKYLLLELPDGWIIIHLGMSGSLRILPEALPAEKHDHVDLVMSNGKILRYTDPRRFGAWLWTKELEGHNVLAHLGPEPLSDEFNGEYLQQKCAKKKTAIKPWLMDNKLVVGVGNIYASESLFAAGIHPDRLASSLSTEECDLLARVIKAVLLRSIEQGGTTLKDFPQSDGKPGYFAQELQVYGRKGEPCRVCGTPIVATKHAQRATFYCRHCQK</sequence>
<proteinExistence type="inferred from homology"/>
<organism>
    <name type="scientific">Salmonella paratyphi C (strain RKS4594)</name>
    <dbReference type="NCBI Taxonomy" id="476213"/>
    <lineage>
        <taxon>Bacteria</taxon>
        <taxon>Pseudomonadati</taxon>
        <taxon>Pseudomonadota</taxon>
        <taxon>Gammaproteobacteria</taxon>
        <taxon>Enterobacterales</taxon>
        <taxon>Enterobacteriaceae</taxon>
        <taxon>Salmonella</taxon>
    </lineage>
</organism>
<name>FPG_SALPC</name>
<protein>
    <recommendedName>
        <fullName evidence="2">Formamidopyrimidine-DNA glycosylase</fullName>
        <shortName evidence="2">Fapy-DNA glycosylase</shortName>
        <ecNumber evidence="2">3.2.2.23</ecNumber>
    </recommendedName>
    <alternativeName>
        <fullName evidence="2">DNA-(apurinic or apyrimidinic site) lyase MutM</fullName>
        <shortName evidence="2">AP lyase MutM</shortName>
        <ecNumber evidence="2">4.2.99.18</ecNumber>
    </alternativeName>
</protein>
<evidence type="ECO:0000250" key="1"/>
<evidence type="ECO:0000255" key="2">
    <source>
        <dbReference type="HAMAP-Rule" id="MF_00103"/>
    </source>
</evidence>